<keyword id="KW-0998">Cell outer membrane</keyword>
<keyword id="KW-0903">Direct protein sequencing</keyword>
<keyword id="KW-0472">Membrane</keyword>
<keyword id="KW-0675">Receptor</keyword>
<keyword id="KW-0732">Signal</keyword>
<keyword id="KW-0798">TonB box</keyword>
<keyword id="KW-0812">Transmembrane</keyword>
<keyword id="KW-1134">Transmembrane beta strand</keyword>
<keyword id="KW-0813">Transport</keyword>
<keyword id="KW-0843">Virulence</keyword>
<name>TBPA1_NEIMI</name>
<organism>
    <name type="scientific">Neisseria meningitidis serogroup B</name>
    <dbReference type="NCBI Taxonomy" id="491"/>
    <lineage>
        <taxon>Bacteria</taxon>
        <taxon>Pseudomonadati</taxon>
        <taxon>Pseudomonadota</taxon>
        <taxon>Betaproteobacteria</taxon>
        <taxon>Neisseriales</taxon>
        <taxon>Neisseriaceae</taxon>
        <taxon>Neisseria</taxon>
    </lineage>
</organism>
<gene>
    <name evidence="5" type="primary">tbp1</name>
</gene>
<proteinExistence type="evidence at protein level"/>
<protein>
    <recommendedName>
        <fullName evidence="6">Transferrin-binding protein A</fullName>
        <shortName evidence="6">TbpA</shortName>
    </recommendedName>
    <alternativeName>
        <fullName evidence="5">Transferrin-binding protein 1</fullName>
    </alternativeName>
</protein>
<reference key="1">
    <citation type="journal article" date="1993" name="Gene">
        <title>Cloning and characterization of Neisseria meningitidis genes encoding the transferrin-binding proteins Tbp1 and Tbp2.</title>
        <authorList>
            <person name="Legrain M."/>
            <person name="Mazarin V."/>
            <person name="Irwin S.W."/>
            <person name="Bouchon B."/>
            <person name="Quentin-Millet M.-J."/>
            <person name="Jacobs E."/>
            <person name="Schryvers A.B."/>
        </authorList>
    </citation>
    <scope>NUCLEOTIDE SEQUENCE [GENOMIC DNA]</scope>
    <scope>PROTEIN SEQUENCE OF 25-38 AND 133-149</scope>
    <scope>SUBCELLULAR LOCATION</scope>
    <source>
        <strain>CCUG 37608 / M982 / Serogroup B / Serotype 9</strain>
    </source>
</reference>
<reference key="2">
    <citation type="journal article" date="1990" name="Can. J. Microbiol.">
        <title>Receptors for transferrin in pathogenic bacteria are specific for the host's protein.</title>
        <authorList>
            <person name="Schryvers A.B."/>
            <person name="Gonzalez G.C."/>
        </authorList>
    </citation>
    <scope>HOST-SPECIFICITY</scope>
</reference>
<accession>Q09056</accession>
<evidence type="ECO:0000250" key="1">
    <source>
        <dbReference type="UniProtKB" id="Q9K0U9"/>
    </source>
</evidence>
<evidence type="ECO:0000255" key="2">
    <source>
        <dbReference type="PROSITE-ProRule" id="PRU01360"/>
    </source>
</evidence>
<evidence type="ECO:0000269" key="3">
    <source>
    </source>
</evidence>
<evidence type="ECO:0000269" key="4">
    <source>
    </source>
</evidence>
<evidence type="ECO:0000303" key="5">
    <source>
    </source>
</evidence>
<evidence type="ECO:0000305" key="6"/>
<evidence type="ECO:0000305" key="7">
    <source>
    </source>
</evidence>
<comment type="function">
    <text evidence="1">Neisseria acquires iron by extracting it from serum transferrin (TF) in its human host. Acts as a TF receptor and is required for TF utilization. Binds both apo- and holo-TF, via the TF C-terminus.</text>
</comment>
<comment type="subunit">
    <text evidence="1">Binds both human apo- and holo-transferrin (TF), via the TF C-terminus. Forms a large complex with TF and TbpB.</text>
</comment>
<comment type="subcellular location">
    <subcellularLocation>
        <location evidence="2 7">Cell outer membrane</location>
        <topology evidence="1 2">Multi-pass membrane protein</topology>
    </subcellularLocation>
</comment>
<comment type="induction">
    <text>By iron starvation.</text>
</comment>
<comment type="miscellaneous">
    <text evidence="3">N.meningitidis cells will only bind to human TF, not bovine or porcine TF, explaining at least in part the bacteria's inability to cause infection in non-human hosts.</text>
</comment>
<comment type="similarity">
    <text evidence="6">Belongs to the TonB-dependent receptor family.</text>
</comment>
<feature type="signal peptide" evidence="4">
    <location>
        <begin position="1"/>
        <end position="24"/>
    </location>
</feature>
<feature type="chain" id="PRO_0000034774" description="Transferrin-binding protein A">
    <location>
        <begin position="25"/>
        <end position="911"/>
    </location>
</feature>
<feature type="domain" description="TBDR plug" evidence="2">
    <location>
        <begin position="51"/>
        <end position="176"/>
    </location>
</feature>
<feature type="domain" description="TBDR beta-barrel" evidence="2">
    <location>
        <begin position="187"/>
        <end position="911"/>
    </location>
</feature>
<feature type="short sequence motif" description="TonB box">
    <location>
        <begin position="38"/>
        <end position="45"/>
    </location>
</feature>
<feature type="short sequence motif" description="TonB C-terminal box">
    <location>
        <begin position="894"/>
        <end position="911"/>
    </location>
</feature>
<sequence length="911" mass="101631">MQQQHLFRLNILCLSLMTALPAYAENVQAGQAQEKQLDTIQVKAKKQKTRRDNEVTGLGKLVKTADTLSKEQVLDIRDLTRYDPGIAVVEQGRGASSGYSIRGMDKNRVSLTVDGLAQIQSYTAQAALGGTRTAGSSGAINEIEYENVKAVEISKGSNSVEQGSGALAGSVAFQTKTADDVIGEGRQWGIQSKTAYSGKNRGLTQSIALAGRIGGAEALLIHTGRRAGEIRAHEDAGRGVQSFNRLVPVEDSSEYAYFIVEDECEGKNYETCKSKPKKDVVGKDERQTVSTRDYTGPNRFLADPLSYESRSWLFRPGFRFENKRHYIGGILEHTQQTFDTRDMTVPAFLTKAVFDANSKQAGSLPGNGKYAGNHKYGGLFTNGENGALVGAEYGTGVFYDETHTKSRYGLEYVYTNADKDTWADYARLSYDRQGIGLDNHFQQTHCSADGSDKYCRPSADKPFSYYKSDRVIYGESHRLLQAAFKKSFDTAKIRHNLSVNLGFDRFDSNLRHQDYYYQHANRAYSSKTPPKTANPNGDKSKPYWVSIGGGNVVTGQICLFGNNTYTDCTPRSINGKSYYAAVRDNVRLGRWADVGAGLRYDYRSTHSDDGSVSTGTHRTLSWNAGIVLKPADWLDLTYRTSTGFRLPSFAEMYGWRSGVQSKAVKIDPEKSFNKEAGIVFKGDFGNLEASWFNNAYRDLIVRGYEAQIKNGKEEAKGDPAYLNAQSARITGINILGKIDWNGVWDKLPEGWYSTFAYNRVHVRDIKKRADRTDIQSHLFDAIQPSRYVVGLGYDQPEGKWGVNGMLTYSKAKEITELLGSRALLNGNSRNTKATARRTRPWYIVDVSGYYTIKKHFTLRAGVYNLLNYRYVTWENVRQTAGGAVNQHKNVGVYNRYAAPGRNYTFSLEMKF</sequence>
<dbReference type="EMBL" id="Z15130">
    <property type="protein sequence ID" value="CAA78833.1"/>
    <property type="molecule type" value="Genomic_DNA"/>
</dbReference>
<dbReference type="PIR" id="JN0821">
    <property type="entry name" value="JN0821"/>
</dbReference>
<dbReference type="SMR" id="Q09056"/>
<dbReference type="GO" id="GO:0009279">
    <property type="term" value="C:cell outer membrane"/>
    <property type="evidence" value="ECO:0007669"/>
    <property type="project" value="UniProtKB-SubCell"/>
</dbReference>
<dbReference type="GO" id="GO:0015091">
    <property type="term" value="F:ferric iron transmembrane transporter activity"/>
    <property type="evidence" value="ECO:0007669"/>
    <property type="project" value="InterPro"/>
</dbReference>
<dbReference type="GO" id="GO:0015344">
    <property type="term" value="F:siderophore uptake transmembrane transporter activity"/>
    <property type="evidence" value="ECO:0007669"/>
    <property type="project" value="TreeGrafter"/>
</dbReference>
<dbReference type="CDD" id="cd01347">
    <property type="entry name" value="ligand_gated_channel"/>
    <property type="match status" value="1"/>
</dbReference>
<dbReference type="Gene3D" id="2.40.170.20">
    <property type="entry name" value="TonB-dependent receptor, beta-barrel domain"/>
    <property type="match status" value="1"/>
</dbReference>
<dbReference type="Gene3D" id="2.170.130.10">
    <property type="entry name" value="TonB-dependent receptor, plug domain"/>
    <property type="match status" value="1"/>
</dbReference>
<dbReference type="InterPro" id="IPR012910">
    <property type="entry name" value="Plug_dom"/>
</dbReference>
<dbReference type="InterPro" id="IPR037066">
    <property type="entry name" value="Plug_dom_sf"/>
</dbReference>
<dbReference type="InterPro" id="IPR039426">
    <property type="entry name" value="TonB-dep_rcpt-like"/>
</dbReference>
<dbReference type="InterPro" id="IPR000531">
    <property type="entry name" value="TonB-dep_rcpt_b-brl"/>
</dbReference>
<dbReference type="InterPro" id="IPR010916">
    <property type="entry name" value="TonB_box_CS"/>
</dbReference>
<dbReference type="InterPro" id="IPR010949">
    <property type="entry name" value="TonB_Hb/transfer/lactofer_rcpt"/>
</dbReference>
<dbReference type="InterPro" id="IPR010948">
    <property type="entry name" value="TonB_lacto/transferrin_rcpt"/>
</dbReference>
<dbReference type="InterPro" id="IPR036942">
    <property type="entry name" value="TonB_rcpt_b-brl_sf"/>
</dbReference>
<dbReference type="InterPro" id="IPR010917">
    <property type="entry name" value="TonB_rcpt_CS"/>
</dbReference>
<dbReference type="NCBIfam" id="TIGR01786">
    <property type="entry name" value="TonB-hemlactrns"/>
    <property type="match status" value="1"/>
</dbReference>
<dbReference type="NCBIfam" id="TIGR01776">
    <property type="entry name" value="TonB-tbp-lbp"/>
    <property type="match status" value="1"/>
</dbReference>
<dbReference type="PANTHER" id="PTHR30069">
    <property type="entry name" value="TONB-DEPENDENT OUTER MEMBRANE RECEPTOR"/>
    <property type="match status" value="1"/>
</dbReference>
<dbReference type="PANTHER" id="PTHR30069:SF54">
    <property type="entry name" value="TRANSFERRIN-BINDING PROTEIN A"/>
    <property type="match status" value="1"/>
</dbReference>
<dbReference type="Pfam" id="PF07715">
    <property type="entry name" value="Plug"/>
    <property type="match status" value="1"/>
</dbReference>
<dbReference type="Pfam" id="PF00593">
    <property type="entry name" value="TonB_dep_Rec_b-barrel"/>
    <property type="match status" value="1"/>
</dbReference>
<dbReference type="SUPFAM" id="SSF56935">
    <property type="entry name" value="Porins"/>
    <property type="match status" value="1"/>
</dbReference>
<dbReference type="PROSITE" id="PS00430">
    <property type="entry name" value="TONB_DEPENDENT_REC_1"/>
    <property type="match status" value="1"/>
</dbReference>
<dbReference type="PROSITE" id="PS01156">
    <property type="entry name" value="TONB_DEPENDENT_REC_2"/>
    <property type="match status" value="1"/>
</dbReference>
<dbReference type="PROSITE" id="PS52016">
    <property type="entry name" value="TONB_DEPENDENT_REC_3"/>
    <property type="match status" value="1"/>
</dbReference>